<feature type="chain" id="PRO_0000300217" description="Cell division activator CedA">
    <location>
        <begin position="1"/>
        <end position="80"/>
    </location>
</feature>
<comment type="function">
    <text evidence="1">Activates the cell division inhibited by chromosomal DNA over-replication.</text>
</comment>
<comment type="similarity">
    <text evidence="1">Belongs to the CedA family.</text>
</comment>
<comment type="sequence caution" evidence="2">
    <conflict type="erroneous initiation">
        <sequence resource="EMBL-CDS" id="ABF03675"/>
    </conflict>
</comment>
<evidence type="ECO:0000255" key="1">
    <source>
        <dbReference type="HAMAP-Rule" id="MF_01580"/>
    </source>
</evidence>
<evidence type="ECO:0000305" key="2"/>
<gene>
    <name evidence="1" type="primary">cedA</name>
    <name type="ordered locus">SFV_1489</name>
</gene>
<dbReference type="EMBL" id="CP000266">
    <property type="protein sequence ID" value="ABF03675.1"/>
    <property type="status" value="ALT_INIT"/>
    <property type="molecule type" value="Genomic_DNA"/>
</dbReference>
<dbReference type="SMR" id="Q0T4U0"/>
<dbReference type="KEGG" id="sfv:SFV_1489"/>
<dbReference type="HOGENOM" id="CLU_167445_0_0_6"/>
<dbReference type="Proteomes" id="UP000000659">
    <property type="component" value="Chromosome"/>
</dbReference>
<dbReference type="GO" id="GO:0003677">
    <property type="term" value="F:DNA binding"/>
    <property type="evidence" value="ECO:0007669"/>
    <property type="project" value="UniProtKB-UniRule"/>
</dbReference>
<dbReference type="GO" id="GO:0051301">
    <property type="term" value="P:cell division"/>
    <property type="evidence" value="ECO:0007669"/>
    <property type="project" value="UniProtKB-UniRule"/>
</dbReference>
<dbReference type="FunFam" id="3.30.730.20:FF:000001">
    <property type="entry name" value="Cell division activator CedA"/>
    <property type="match status" value="1"/>
</dbReference>
<dbReference type="Gene3D" id="3.30.730.20">
    <property type="entry name" value="Cell division activator CedA"/>
    <property type="match status" value="1"/>
</dbReference>
<dbReference type="HAMAP" id="MF_01580">
    <property type="entry name" value="CedA"/>
    <property type="match status" value="1"/>
</dbReference>
<dbReference type="InterPro" id="IPR038463">
    <property type="entry name" value="CedA-like_sf"/>
</dbReference>
<dbReference type="InterPro" id="IPR019666">
    <property type="entry name" value="Cell_div_activator_CedA"/>
</dbReference>
<dbReference type="NCBIfam" id="NF007510">
    <property type="entry name" value="PRK10113.1"/>
    <property type="match status" value="1"/>
</dbReference>
<dbReference type="Pfam" id="PF10729">
    <property type="entry name" value="CedA"/>
    <property type="match status" value="1"/>
</dbReference>
<name>CEDA_SHIF8</name>
<protein>
    <recommendedName>
        <fullName evidence="1">Cell division activator CedA</fullName>
    </recommendedName>
</protein>
<reference key="1">
    <citation type="journal article" date="2006" name="BMC Genomics">
        <title>Complete genome sequence of Shigella flexneri 5b and comparison with Shigella flexneri 2a.</title>
        <authorList>
            <person name="Nie H."/>
            <person name="Yang F."/>
            <person name="Zhang X."/>
            <person name="Yang J."/>
            <person name="Chen L."/>
            <person name="Wang J."/>
            <person name="Xiong Z."/>
            <person name="Peng J."/>
            <person name="Sun L."/>
            <person name="Dong J."/>
            <person name="Xue Y."/>
            <person name="Xu X."/>
            <person name="Chen S."/>
            <person name="Yao Z."/>
            <person name="Shen Y."/>
            <person name="Jin Q."/>
        </authorList>
    </citation>
    <scope>NUCLEOTIDE SEQUENCE [LARGE SCALE GENOMIC DNA]</scope>
    <source>
        <strain>8401</strain>
    </source>
</reference>
<sequence>MKKPLRQQNRQIISYVPRTEPAPPEHAIKMDSFRDVWMLRGKYVAFVLMGESFLRSPAFTVPESAQRWANQIRQEGEVTE</sequence>
<organism>
    <name type="scientific">Shigella flexneri serotype 5b (strain 8401)</name>
    <dbReference type="NCBI Taxonomy" id="373384"/>
    <lineage>
        <taxon>Bacteria</taxon>
        <taxon>Pseudomonadati</taxon>
        <taxon>Pseudomonadota</taxon>
        <taxon>Gammaproteobacteria</taxon>
        <taxon>Enterobacterales</taxon>
        <taxon>Enterobacteriaceae</taxon>
        <taxon>Shigella</taxon>
    </lineage>
</organism>
<proteinExistence type="inferred from homology"/>
<keyword id="KW-0131">Cell cycle</keyword>
<keyword id="KW-0132">Cell division</keyword>
<keyword id="KW-0238">DNA-binding</keyword>
<accession>Q0T4U0</accession>